<protein>
    <recommendedName>
        <fullName evidence="2">Spore-associated protein A</fullName>
    </recommendedName>
</protein>
<feature type="signal peptide" evidence="1">
    <location>
        <begin position="1"/>
        <end position="33"/>
    </location>
</feature>
<feature type="chain" id="PRO_0000022270" description="Spore-associated protein A">
    <location>
        <begin position="34"/>
        <end position="154"/>
    </location>
</feature>
<feature type="sequence conflict" description="In Ref. 2; AAA26812." evidence="3" ref="2">
    <original>G</original>
    <variation>R</variation>
    <location>
        <position position="108"/>
    </location>
</feature>
<feature type="sequence conflict" description="In Ref. 2; AAA26812." evidence="3" ref="2">
    <original>G</original>
    <variation>R</variation>
    <location>
        <position position="116"/>
    </location>
</feature>
<accession>P12690</accession>
<accession>Q9RJS7</accession>
<proteinExistence type="evidence at protein level"/>
<name>SAPA_STRCO</name>
<reference key="1">
    <citation type="journal article" date="2002" name="Nature">
        <title>Complete genome sequence of the model actinomycete Streptomyces coelicolor A3(2).</title>
        <authorList>
            <person name="Bentley S.D."/>
            <person name="Chater K.F."/>
            <person name="Cerdeno-Tarraga A.-M."/>
            <person name="Challis G.L."/>
            <person name="Thomson N.R."/>
            <person name="James K.D."/>
            <person name="Harris D.E."/>
            <person name="Quail M.A."/>
            <person name="Kieser H."/>
            <person name="Harper D."/>
            <person name="Bateman A."/>
            <person name="Brown S."/>
            <person name="Chandra G."/>
            <person name="Chen C.W."/>
            <person name="Collins M."/>
            <person name="Cronin A."/>
            <person name="Fraser A."/>
            <person name="Goble A."/>
            <person name="Hidalgo J."/>
            <person name="Hornsby T."/>
            <person name="Howarth S."/>
            <person name="Huang C.-H."/>
            <person name="Kieser T."/>
            <person name="Larke L."/>
            <person name="Murphy L.D."/>
            <person name="Oliver K."/>
            <person name="O'Neil S."/>
            <person name="Rabbinowitsch E."/>
            <person name="Rajandream M.A."/>
            <person name="Rutherford K.M."/>
            <person name="Rutter S."/>
            <person name="Seeger K."/>
            <person name="Saunders D."/>
            <person name="Sharp S."/>
            <person name="Squares R."/>
            <person name="Squares S."/>
            <person name="Taylor K."/>
            <person name="Warren T."/>
            <person name="Wietzorrek A."/>
            <person name="Woodward J.R."/>
            <person name="Barrell B.G."/>
            <person name="Parkhill J."/>
            <person name="Hopwood D.A."/>
        </authorList>
    </citation>
    <scope>NUCLEOTIDE SEQUENCE [LARGE SCALE GENOMIC DNA]</scope>
    <source>
        <strain>ATCC BAA-471 / A3(2) / M145</strain>
    </source>
</reference>
<reference key="2">
    <citation type="journal article" date="1988" name="J. Bacteriol.">
        <title>Promoter determining the timing and spatial localization of transcription of a cloned Streptomyces coelicolor gene encoding a spore-associated polypeptide.</title>
        <authorList>
            <person name="Guijarro J."/>
            <person name="Santamaria R."/>
            <person name="Schauer A."/>
            <person name="Losick R."/>
        </authorList>
    </citation>
    <scope>NUCLEOTIDE SEQUENCE [GENOMIC DNA] OF 1-116</scope>
    <scope>PROTEIN SEQUENCE OF 34-53</scope>
    <scope>SUBCELLULAR LOCATION</scope>
    <scope>DEVELOPMENTAL STAGE</scope>
    <source>
        <strain>A3(2)</strain>
    </source>
</reference>
<comment type="subcellular location">
    <subcellularLocation>
        <location>Spore wall</location>
    </subcellularLocation>
    <text evidence="1">Spore surface.</text>
</comment>
<comment type="developmental stage">
    <text evidence="1">Transcription of this protein is induced at the time of appearance of aerial mycelium before the beginning of spore formation.</text>
</comment>
<comment type="sequence caution" evidence="3">
    <conflict type="erroneous initiation">
        <sequence resource="EMBL-CDS" id="AAA26812"/>
    </conflict>
    <text>Extended N-terminus.</text>
</comment>
<comment type="sequence caution" evidence="3">
    <conflict type="frameshift">
        <sequence resource="EMBL-CDS" id="AAA26812"/>
    </conflict>
</comment>
<keyword id="KW-0903">Direct protein sequencing</keyword>
<keyword id="KW-1185">Reference proteome</keyword>
<keyword id="KW-0732">Signal</keyword>
<keyword id="KW-0749">Sporulation</keyword>
<sequence>MQAVGATLTAVGAIGAGLLVTAPAAGAATAGATASYNGVCGSGYKVVNSMPIGSTGTVYLTYNSATGKNCTVTIRNTTGTPTYMVAYVRNIESGADQYDEGDYRSYAGPVYVSARGACVEWGGVIGNLQAWNYGSNCGALAAKAPQKDWFAGQR</sequence>
<organism>
    <name type="scientific">Streptomyces coelicolor (strain ATCC BAA-471 / A3(2) / M145)</name>
    <dbReference type="NCBI Taxonomy" id="100226"/>
    <lineage>
        <taxon>Bacteria</taxon>
        <taxon>Bacillati</taxon>
        <taxon>Actinomycetota</taxon>
        <taxon>Actinomycetes</taxon>
        <taxon>Kitasatosporales</taxon>
        <taxon>Streptomycetaceae</taxon>
        <taxon>Streptomyces</taxon>
        <taxon>Streptomyces albidoflavus group</taxon>
    </lineage>
</organism>
<evidence type="ECO:0000269" key="1">
    <source>
    </source>
</evidence>
<evidence type="ECO:0000303" key="2">
    <source>
    </source>
</evidence>
<evidence type="ECO:0000305" key="3"/>
<gene>
    <name evidence="2" type="primary">sapA</name>
    <name type="ordered locus">SCO0409</name>
    <name type="ORF">SCF51.08c</name>
</gene>
<dbReference type="EMBL" id="AL939105">
    <property type="protein sequence ID" value="CAB59706.1"/>
    <property type="molecule type" value="Genomic_DNA"/>
</dbReference>
<dbReference type="EMBL" id="M20145">
    <property type="protein sequence ID" value="AAA26812.1"/>
    <property type="status" value="ALT_SEQ"/>
    <property type="molecule type" value="Genomic_DNA"/>
</dbReference>
<dbReference type="PIR" id="T42054">
    <property type="entry name" value="T42054"/>
</dbReference>
<dbReference type="RefSeq" id="NP_624730.1">
    <property type="nucleotide sequence ID" value="NC_003888.3"/>
</dbReference>
<dbReference type="RefSeq" id="WP_003978456.1">
    <property type="nucleotide sequence ID" value="NZ_VNID01000015.1"/>
</dbReference>
<dbReference type="STRING" id="100226.gene:17757992"/>
<dbReference type="PaxDb" id="100226-SCO0409"/>
<dbReference type="KEGG" id="sco:SCO0409"/>
<dbReference type="PATRIC" id="fig|100226.15.peg.385"/>
<dbReference type="eggNOG" id="COG0739">
    <property type="taxonomic scope" value="Bacteria"/>
</dbReference>
<dbReference type="HOGENOM" id="CLU_144851_0_0_11"/>
<dbReference type="InParanoid" id="P12690"/>
<dbReference type="OrthoDB" id="1099523at2"/>
<dbReference type="Proteomes" id="UP000001973">
    <property type="component" value="Chromosome"/>
</dbReference>
<dbReference type="GO" id="GO:0031160">
    <property type="term" value="C:spore wall"/>
    <property type="evidence" value="ECO:0007669"/>
    <property type="project" value="UniProtKB-SubCell"/>
</dbReference>
<dbReference type="GO" id="GO:0030435">
    <property type="term" value="P:sporulation resulting in formation of a cellular spore"/>
    <property type="evidence" value="ECO:0007669"/>
    <property type="project" value="UniProtKB-KW"/>
</dbReference>